<dbReference type="EMBL" id="KT695159">
    <property type="protein sequence ID" value="ALJ32152.1"/>
    <property type="molecule type" value="mRNA"/>
</dbReference>
<dbReference type="PDB" id="5VBK">
    <property type="method" value="X-ray"/>
    <property type="resolution" value="1.79 A"/>
    <property type="chains" value="A/B=1-150"/>
</dbReference>
<dbReference type="PDB" id="8VCK">
    <property type="method" value="X-ray"/>
    <property type="resolution" value="1.49 A"/>
    <property type="chains" value="A/B=1-150"/>
</dbReference>
<dbReference type="PDB" id="8VCM">
    <property type="method" value="X-ray"/>
    <property type="resolution" value="2.21 A"/>
    <property type="chains" value="A/B=1-150"/>
</dbReference>
<dbReference type="PDB" id="8VCO">
    <property type="method" value="X-ray"/>
    <property type="resolution" value="1.66 A"/>
    <property type="chains" value="A/B=1-150"/>
</dbReference>
<dbReference type="PDB" id="8VCP">
    <property type="method" value="X-ray"/>
    <property type="resolution" value="1.58 A"/>
    <property type="chains" value="A/B=1-150"/>
</dbReference>
<dbReference type="PDB" id="8VCQ">
    <property type="method" value="X-ray"/>
    <property type="resolution" value="2.09 A"/>
    <property type="chains" value="A/B/C/D/E/F/G/H=1-150"/>
</dbReference>
<dbReference type="PDB" id="8VCS">
    <property type="method" value="X-ray"/>
    <property type="resolution" value="1.89 A"/>
    <property type="chains" value="A/B/C/D/E/F/G/H=1-150"/>
</dbReference>
<dbReference type="PDB" id="8VCU">
    <property type="method" value="X-ray"/>
    <property type="resolution" value="1.77 A"/>
    <property type="chains" value="A/B/C/D=1-150"/>
</dbReference>
<dbReference type="PDBsum" id="5VBK"/>
<dbReference type="PDBsum" id="8VCK"/>
<dbReference type="PDBsum" id="8VCM"/>
<dbReference type="PDBsum" id="8VCO"/>
<dbReference type="PDBsum" id="8VCP"/>
<dbReference type="PDBsum" id="8VCQ"/>
<dbReference type="PDBsum" id="8VCS"/>
<dbReference type="PDBsum" id="8VCU"/>
<dbReference type="SMR" id="A0A0P0E482"/>
<dbReference type="UniLectin" id="A0A0P0E482"/>
<dbReference type="GO" id="GO:0005534">
    <property type="term" value="F:galactose binding"/>
    <property type="evidence" value="ECO:0000314"/>
    <property type="project" value="UniProtKB"/>
</dbReference>
<dbReference type="CDD" id="cd23417">
    <property type="entry name" value="beta-trefoil_Ricin_MytiLec-like"/>
    <property type="match status" value="1"/>
</dbReference>
<dbReference type="FunFam" id="2.80.10.50:FF:000161">
    <property type="entry name" value="Lectin"/>
    <property type="match status" value="1"/>
</dbReference>
<dbReference type="Gene3D" id="2.80.10.50">
    <property type="match status" value="1"/>
</dbReference>
<accession>A0A0P0E482</accession>
<protein>
    <recommendedName>
        <fullName evidence="4">Galactose-binding lectin</fullName>
    </recommendedName>
    <alternativeName>
        <fullName evidence="4">MCL</fullName>
    </alternativeName>
</protein>
<name>LEC_MYTCA</name>
<sequence length="150" mass="16911">MTTFLIKHKASGKFLHPKGGSSNPANDTNLVLHSDIHERMYFQFDVVDERWGYIKHAASGKIVHPLGGKADPPNETKLVLHQDRHDRALFAMDFFNDNIIHKAGKYVHPKGGSTNPPNETLTVMHGDKHGAMEFIFVSPKNKDKRVLVYV</sequence>
<proteinExistence type="evidence at protein level"/>
<reference evidence="6" key="1">
    <citation type="journal article" date="2017" name="Fish Shellfish Immunol.">
        <title>Molecular and functional characterization of a glycosylated Galactose-Binding lectin from Mytilus californianus.</title>
        <authorList>
            <person name="Garcia-Maldonado E."/>
            <person name="Cano-Sanchez P."/>
            <person name="Hernandez-Santoyo A."/>
        </authorList>
    </citation>
    <scope>NUCLEOTIDE SEQUENCE [MRNA]</scope>
    <scope>X-RAY CRYSTALLOGRAPHY (1.79 ANGSTROMS)</scope>
    <scope>FUNCTION</scope>
    <scope>ACTIVITY REGULATION</scope>
    <scope>BIOPHYSICOCHEMICAL PROPERTIES</scope>
    <scope>SUBUNIT</scope>
    <scope>MASS SPECTROMETRY</scope>
    <scope>GLYCOSYLATION</scope>
    <scope>CIRCULAR DICHROISM ANALYSIS</scope>
</reference>
<comment type="function">
    <text evidence="3">D-galactose-binding lectin. Also binds N-acetyl-D-galactosamine. Has hemagglutination activity towards all types of human erythrocytes (O, A and B) and rabbit erythrocytes. Agglutinates Gram-negative and Gram-positive bacteria including E.coli DH5-alpha and L.plantarum ATCC8014, respectively, and has bacteriostatic activity against them. Also agglutinates M.lysodeikticus. May be involved in innate immunity by recognizing and eliminating pathogens.</text>
</comment>
<comment type="activity regulation">
    <text evidence="3">Hemagglutination activity is not dependent on divalent cations. Hemagglutination activity is highly inhibited by D-galactose and N-acetyl-D-galactosamine, and to a lesser extent by raffinose. Also inhibited by melibiose and alpha-lactose, but not by beta-lactose or D-glucose.</text>
</comment>
<comment type="biophysicochemical properties">
    <phDependence>
        <text evidence="3">Optimum hemagglutination activity at pH 7.4. Retains its hemagglutination activity throughout pH range 3-10. This protein is most stable at pH 7.4.</text>
    </phDependence>
    <temperatureDependence>
        <text evidence="3">Optimum hemagglutination activity between 37 and 40 degrees Celsius. Retains its hemagglutination activity up to 60 degrees Celsius, but loses the activity at higher temperatures. This protein is stable at high temperatures over 80 degrees Celsius. The thermal stability is increased by the presence of ligand D-galactose.</text>
    </temperatureDependence>
</comment>
<comment type="subunit">
    <text evidence="3">Homodimer. Likely to form large oligomers; oligomerization enhances hemagglutination activity.</text>
</comment>
<comment type="PTM">
    <text evidence="3">Glycosylated.</text>
</comment>
<comment type="mass spectrometry" mass="18007.0" method="MALDI" evidence="3">
    <text>Glycosylated form.</text>
</comment>
<keyword id="KW-0002">3D-structure</keyword>
<keyword id="KW-0325">Glycoprotein</keyword>
<keyword id="KW-0348">Hemagglutinin</keyword>
<keyword id="KW-0430">Lectin</keyword>
<organism evidence="5">
    <name type="scientific">Mytilus californianus</name>
    <name type="common">California mussel</name>
    <dbReference type="NCBI Taxonomy" id="6549"/>
    <lineage>
        <taxon>Eukaryota</taxon>
        <taxon>Metazoa</taxon>
        <taxon>Spiralia</taxon>
        <taxon>Lophotrochozoa</taxon>
        <taxon>Mollusca</taxon>
        <taxon>Bivalvia</taxon>
        <taxon>Autobranchia</taxon>
        <taxon>Pteriomorphia</taxon>
        <taxon>Mytilida</taxon>
        <taxon>Mytiloidea</taxon>
        <taxon>Mytilidae</taxon>
        <taxon>Mytilinae</taxon>
        <taxon>Mytilus</taxon>
    </lineage>
</organism>
<evidence type="ECO:0000250" key="1">
    <source>
        <dbReference type="UniProtKB" id="H2FH31"/>
    </source>
</evidence>
<evidence type="ECO:0000255" key="2">
    <source>
        <dbReference type="PROSITE-ProRule" id="PRU00498"/>
    </source>
</evidence>
<evidence type="ECO:0000269" key="3">
    <source>
    </source>
</evidence>
<evidence type="ECO:0000303" key="4">
    <source>
    </source>
</evidence>
<evidence type="ECO:0000312" key="5">
    <source>
        <dbReference type="EMBL" id="ALJ32152.1"/>
    </source>
</evidence>
<evidence type="ECO:0007744" key="6">
    <source>
        <dbReference type="PDB" id="5VBK"/>
    </source>
</evidence>
<evidence type="ECO:0007829" key="7">
    <source>
        <dbReference type="PDB" id="5VBK"/>
    </source>
</evidence>
<evidence type="ECO:0007829" key="8">
    <source>
        <dbReference type="PDB" id="8VCK"/>
    </source>
</evidence>
<feature type="chain" id="PRO_0000453468" description="Galactose-binding lectin">
    <location>
        <begin position="1"/>
        <end position="150"/>
    </location>
</feature>
<feature type="binding site" evidence="1">
    <location>
        <position position="16"/>
    </location>
    <ligand>
        <name>D-galactose</name>
        <dbReference type="ChEBI" id="CHEBI:4139"/>
        <label>1</label>
    </ligand>
</feature>
<feature type="binding site" evidence="1">
    <location>
        <position position="19"/>
    </location>
    <ligand>
        <name>D-galactose</name>
        <dbReference type="ChEBI" id="CHEBI:4139"/>
        <label>1</label>
    </ligand>
</feature>
<feature type="binding site" evidence="1">
    <location>
        <position position="27"/>
    </location>
    <ligand>
        <name>D-galactose</name>
        <dbReference type="ChEBI" id="CHEBI:4139"/>
        <label>2</label>
    </ligand>
</feature>
<feature type="binding site" evidence="1">
    <location>
        <begin position="35"/>
        <end position="37"/>
    </location>
    <ligand>
        <name>D-galactose</name>
        <dbReference type="ChEBI" id="CHEBI:4139"/>
        <label>1</label>
    </ligand>
</feature>
<feature type="binding site" evidence="1">
    <location>
        <position position="64"/>
    </location>
    <ligand>
        <name>D-galactose</name>
        <dbReference type="ChEBI" id="CHEBI:4139"/>
        <label>2</label>
    </ligand>
</feature>
<feature type="binding site" evidence="1">
    <location>
        <position position="67"/>
    </location>
    <ligand>
        <name>D-galactose</name>
        <dbReference type="ChEBI" id="CHEBI:4139"/>
        <label>2</label>
    </ligand>
</feature>
<feature type="binding site" evidence="1">
    <location>
        <position position="75"/>
    </location>
    <ligand>
        <name>D-galactose</name>
        <dbReference type="ChEBI" id="CHEBI:4139"/>
        <label>3</label>
    </ligand>
</feature>
<feature type="binding site" evidence="1">
    <location>
        <begin position="83"/>
        <end position="85"/>
    </location>
    <ligand>
        <name>D-galactose</name>
        <dbReference type="ChEBI" id="CHEBI:4139"/>
        <label>2</label>
    </ligand>
</feature>
<feature type="binding site" evidence="1">
    <location>
        <position position="108"/>
    </location>
    <ligand>
        <name>D-galactose</name>
        <dbReference type="ChEBI" id="CHEBI:4139"/>
        <label>3</label>
    </ligand>
</feature>
<feature type="binding site" evidence="1">
    <location>
        <position position="111"/>
    </location>
    <ligand>
        <name>D-galactose</name>
        <dbReference type="ChEBI" id="CHEBI:4139"/>
        <label>3</label>
    </ligand>
</feature>
<feature type="binding site" evidence="1">
    <location>
        <position position="119"/>
    </location>
    <ligand>
        <name>D-galactose</name>
        <dbReference type="ChEBI" id="CHEBI:4139"/>
        <label>1</label>
    </ligand>
</feature>
<feature type="binding site" evidence="1">
    <location>
        <begin position="127"/>
        <end position="129"/>
    </location>
    <ligand>
        <name>D-galactose</name>
        <dbReference type="ChEBI" id="CHEBI:4139"/>
        <label>3</label>
    </ligand>
</feature>
<feature type="glycosylation site" description="N-linked (GlcNAc...) asparagine" evidence="2">
    <location>
        <position position="26"/>
    </location>
</feature>
<feature type="glycosylation site" description="N-linked (GlcNAc...) asparagine" evidence="2">
    <location>
        <position position="74"/>
    </location>
</feature>
<feature type="glycosylation site" description="N-linked (GlcNAc...) asparagine" evidence="2">
    <location>
        <position position="118"/>
    </location>
</feature>
<feature type="strand" evidence="8">
    <location>
        <begin position="4"/>
        <end position="8"/>
    </location>
</feature>
<feature type="turn" evidence="8">
    <location>
        <begin position="9"/>
        <end position="11"/>
    </location>
</feature>
<feature type="strand" evidence="8">
    <location>
        <begin position="14"/>
        <end position="17"/>
    </location>
</feature>
<feature type="strand" evidence="8">
    <location>
        <begin position="28"/>
        <end position="34"/>
    </location>
</feature>
<feature type="helix" evidence="8">
    <location>
        <begin position="38"/>
        <end position="40"/>
    </location>
</feature>
<feature type="strand" evidence="8">
    <location>
        <begin position="42"/>
        <end position="48"/>
    </location>
</feature>
<feature type="strand" evidence="8">
    <location>
        <begin position="51"/>
        <end position="56"/>
    </location>
</feature>
<feature type="turn" evidence="8">
    <location>
        <begin position="57"/>
        <end position="59"/>
    </location>
</feature>
<feature type="strand" evidence="8">
    <location>
        <begin position="62"/>
        <end position="65"/>
    </location>
</feature>
<feature type="helix" evidence="7">
    <location>
        <begin position="66"/>
        <end position="68"/>
    </location>
</feature>
<feature type="strand" evidence="8">
    <location>
        <begin position="77"/>
        <end position="82"/>
    </location>
</feature>
<feature type="helix" evidence="8">
    <location>
        <begin position="86"/>
        <end position="88"/>
    </location>
</feature>
<feature type="strand" evidence="8">
    <location>
        <begin position="90"/>
        <end position="93"/>
    </location>
</feature>
<feature type="turn" evidence="8">
    <location>
        <begin position="94"/>
        <end position="97"/>
    </location>
</feature>
<feature type="strand" evidence="8">
    <location>
        <begin position="98"/>
        <end position="101"/>
    </location>
</feature>
<feature type="strand" evidence="8">
    <location>
        <begin position="106"/>
        <end position="109"/>
    </location>
</feature>
<feature type="strand" evidence="8">
    <location>
        <begin position="120"/>
        <end position="126"/>
    </location>
</feature>
<feature type="helix" evidence="8">
    <location>
        <begin position="130"/>
        <end position="132"/>
    </location>
</feature>
<feature type="strand" evidence="8">
    <location>
        <begin position="134"/>
        <end position="138"/>
    </location>
</feature>
<feature type="strand" evidence="8">
    <location>
        <begin position="141"/>
        <end position="145"/>
    </location>
</feature>